<proteinExistence type="inferred from homology"/>
<organism>
    <name type="scientific">Prunus armeniaca phytoplasma</name>
    <dbReference type="NCBI Taxonomy" id="36589"/>
    <lineage>
        <taxon>Bacteria</taxon>
        <taxon>Bacillati</taxon>
        <taxon>Mycoplasmatota</taxon>
        <taxon>Mollicutes</taxon>
        <taxon>Acholeplasmatales</taxon>
        <taxon>Acholeplasmataceae</taxon>
        <taxon>Candidatus Phytoplasma</taxon>
    </lineage>
</organism>
<evidence type="ECO:0000250" key="1"/>
<evidence type="ECO:0000305" key="2"/>
<name>RS19_PRUAP</name>
<keyword id="KW-0687">Ribonucleoprotein</keyword>
<keyword id="KW-0689">Ribosomal protein</keyword>
<keyword id="KW-0694">RNA-binding</keyword>
<keyword id="KW-0699">rRNA-binding</keyword>
<accession>Q44160</accession>
<reference key="1">
    <citation type="journal article" date="1994" name="J. Bacteriol.">
        <title>Phylogeny of mycoplasmalike organisms (phytoplasmas): a basis for their classification.</title>
        <authorList>
            <person name="Gundersen D.E."/>
            <person name="Lee I.M."/>
            <person name="Rehner S.A."/>
            <person name="Davis R.E."/>
            <person name="Kingsbury D.T."/>
        </authorList>
    </citation>
    <scope>NUCLEOTIDE SEQUENCE [GENOMIC DNA]</scope>
</reference>
<sequence>FRGHDKKDKKIQKK</sequence>
<protein>
    <recommendedName>
        <fullName evidence="2">Small ribosomal subunit protein uS19</fullName>
    </recommendedName>
    <alternativeName>
        <fullName>30S ribosomal protein S19</fullName>
    </alternativeName>
</protein>
<feature type="chain" id="PRO_0000129882" description="Small ribosomal subunit protein uS19">
    <location>
        <begin position="1" status="less than"/>
        <end position="14"/>
    </location>
</feature>
<feature type="non-terminal residue">
    <location>
        <position position="1"/>
    </location>
</feature>
<dbReference type="EMBL" id="L26994">
    <property type="protein sequence ID" value="AAA83934.1"/>
    <property type="molecule type" value="Genomic_DNA"/>
</dbReference>
<dbReference type="GO" id="GO:1990904">
    <property type="term" value="C:ribonucleoprotein complex"/>
    <property type="evidence" value="ECO:0007669"/>
    <property type="project" value="UniProtKB-KW"/>
</dbReference>
<dbReference type="GO" id="GO:0005840">
    <property type="term" value="C:ribosome"/>
    <property type="evidence" value="ECO:0007669"/>
    <property type="project" value="UniProtKB-KW"/>
</dbReference>
<dbReference type="GO" id="GO:0019843">
    <property type="term" value="F:rRNA binding"/>
    <property type="evidence" value="ECO:0007669"/>
    <property type="project" value="UniProtKB-KW"/>
</dbReference>
<comment type="function">
    <text evidence="1">Protein S19 forms a complex with S13 that binds strongly to the 16S ribosomal RNA.</text>
</comment>
<comment type="similarity">
    <text evidence="2">Belongs to the universal ribosomal protein uS19 family.</text>
</comment>
<gene>
    <name type="primary">rpsS</name>
    <name type="synonym">rps19</name>
</gene>